<proteinExistence type="evidence at protein level"/>
<accession>P41809</accession>
<accession>D6VT50</accession>
<accession>Q04051</accession>
<reference key="1">
    <citation type="journal article" date="1994" name="J. Bacteriol.">
        <title>Cloning of the Saccharomyces cerevisiae gene whose overexpression overcomes the effects of HM-1 killer toxin, which inhibits beta-glucan synthesis.</title>
        <authorList>
            <person name="Kasahara S."/>
            <person name="Yamada H."/>
            <person name="Mio T."/>
            <person name="Shiratori Y."/>
            <person name="Miyamoto C."/>
            <person name="Yabe T."/>
            <person name="Nakajima T."/>
            <person name="Ichishima E."/>
            <person name="Furuichi Y."/>
        </authorList>
    </citation>
    <scope>NUCLEOTIDE SEQUENCE [GENOMIC DNA]</scope>
    <source>
        <strain>ATCC 200358 / YNN 295</strain>
    </source>
</reference>
<reference key="2">
    <citation type="journal article" date="1997" name="Nature">
        <title>The nucleotide sequence of Saccharomyces cerevisiae chromosome IV.</title>
        <authorList>
            <person name="Jacq C."/>
            <person name="Alt-Moerbe J."/>
            <person name="Andre B."/>
            <person name="Arnold W."/>
            <person name="Bahr A."/>
            <person name="Ballesta J.P.G."/>
            <person name="Bargues M."/>
            <person name="Baron L."/>
            <person name="Becker A."/>
            <person name="Biteau N."/>
            <person name="Bloecker H."/>
            <person name="Blugeon C."/>
            <person name="Boskovic J."/>
            <person name="Brandt P."/>
            <person name="Brueckner M."/>
            <person name="Buitrago M.J."/>
            <person name="Coster F."/>
            <person name="Delaveau T."/>
            <person name="del Rey F."/>
            <person name="Dujon B."/>
            <person name="Eide L.G."/>
            <person name="Garcia-Cantalejo J.M."/>
            <person name="Goffeau A."/>
            <person name="Gomez-Peris A."/>
            <person name="Granotier C."/>
            <person name="Hanemann V."/>
            <person name="Hankeln T."/>
            <person name="Hoheisel J.D."/>
            <person name="Jaeger W."/>
            <person name="Jimenez A."/>
            <person name="Jonniaux J.-L."/>
            <person name="Kraemer C."/>
            <person name="Kuester H."/>
            <person name="Laamanen P."/>
            <person name="Legros Y."/>
            <person name="Louis E.J."/>
            <person name="Moeller-Rieker S."/>
            <person name="Monnet A."/>
            <person name="Moro M."/>
            <person name="Mueller-Auer S."/>
            <person name="Nussbaumer B."/>
            <person name="Paricio N."/>
            <person name="Paulin L."/>
            <person name="Perea J."/>
            <person name="Perez-Alonso M."/>
            <person name="Perez-Ortin J.E."/>
            <person name="Pohl T.M."/>
            <person name="Prydz H."/>
            <person name="Purnelle B."/>
            <person name="Rasmussen S.W."/>
            <person name="Remacha M.A."/>
            <person name="Revuelta J.L."/>
            <person name="Rieger M."/>
            <person name="Salom D."/>
            <person name="Saluz H.P."/>
            <person name="Saiz J.E."/>
            <person name="Saren A.-M."/>
            <person name="Schaefer M."/>
            <person name="Scharfe M."/>
            <person name="Schmidt E.R."/>
            <person name="Schneider C."/>
            <person name="Scholler P."/>
            <person name="Schwarz S."/>
            <person name="Soler-Mira A."/>
            <person name="Urrestarazu L.A."/>
            <person name="Verhasselt P."/>
            <person name="Vissers S."/>
            <person name="Voet M."/>
            <person name="Volckaert G."/>
            <person name="Wagner G."/>
            <person name="Wambutt R."/>
            <person name="Wedler E."/>
            <person name="Wedler H."/>
            <person name="Woelfl S."/>
            <person name="Harris D.E."/>
            <person name="Bowman S."/>
            <person name="Brown D."/>
            <person name="Churcher C.M."/>
            <person name="Connor R."/>
            <person name="Dedman K."/>
            <person name="Gentles S."/>
            <person name="Hamlin N."/>
            <person name="Hunt S."/>
            <person name="Jones L."/>
            <person name="McDonald S."/>
            <person name="Murphy L.D."/>
            <person name="Niblett D."/>
            <person name="Odell C."/>
            <person name="Oliver K."/>
            <person name="Rajandream M.A."/>
            <person name="Richards C."/>
            <person name="Shore L."/>
            <person name="Walsh S.V."/>
            <person name="Barrell B.G."/>
            <person name="Dietrich F.S."/>
            <person name="Mulligan J.T."/>
            <person name="Allen E."/>
            <person name="Araujo R."/>
            <person name="Aviles E."/>
            <person name="Berno A."/>
            <person name="Carpenter J."/>
            <person name="Chen E."/>
            <person name="Cherry J.M."/>
            <person name="Chung E."/>
            <person name="Duncan M."/>
            <person name="Hunicke-Smith S."/>
            <person name="Hyman R.W."/>
            <person name="Komp C."/>
            <person name="Lashkari D."/>
            <person name="Lew H."/>
            <person name="Lin D."/>
            <person name="Mosedale D."/>
            <person name="Nakahara K."/>
            <person name="Namath A."/>
            <person name="Oefner P."/>
            <person name="Oh C."/>
            <person name="Petel F.X."/>
            <person name="Roberts D."/>
            <person name="Schramm S."/>
            <person name="Schroeder M."/>
            <person name="Shogren T."/>
            <person name="Shroff N."/>
            <person name="Winant A."/>
            <person name="Yelton M.A."/>
            <person name="Botstein D."/>
            <person name="Davis R.W."/>
            <person name="Johnston M."/>
            <person name="Andrews S."/>
            <person name="Brinkman R."/>
            <person name="Cooper J."/>
            <person name="Ding H."/>
            <person name="Du Z."/>
            <person name="Favello A."/>
            <person name="Fulton L."/>
            <person name="Gattung S."/>
            <person name="Greco T."/>
            <person name="Hallsworth K."/>
            <person name="Hawkins J."/>
            <person name="Hillier L.W."/>
            <person name="Jier M."/>
            <person name="Johnson D."/>
            <person name="Johnston L."/>
            <person name="Kirsten J."/>
            <person name="Kucaba T."/>
            <person name="Langston Y."/>
            <person name="Latreille P."/>
            <person name="Le T."/>
            <person name="Mardis E."/>
            <person name="Menezes S."/>
            <person name="Miller N."/>
            <person name="Nhan M."/>
            <person name="Pauley A."/>
            <person name="Peluso D."/>
            <person name="Rifkin L."/>
            <person name="Riles L."/>
            <person name="Taich A."/>
            <person name="Trevaskis E."/>
            <person name="Vignati D."/>
            <person name="Wilcox L."/>
            <person name="Wohldman P."/>
            <person name="Vaudin M."/>
            <person name="Wilson R."/>
            <person name="Waterston R."/>
            <person name="Albermann K."/>
            <person name="Hani J."/>
            <person name="Heumann K."/>
            <person name="Kleine K."/>
            <person name="Mewes H.-W."/>
            <person name="Zollner A."/>
            <person name="Zaccaria P."/>
        </authorList>
    </citation>
    <scope>NUCLEOTIDE SEQUENCE [LARGE SCALE GENOMIC DNA]</scope>
    <source>
        <strain>ATCC 204508 / S288c</strain>
    </source>
</reference>
<reference key="3">
    <citation type="journal article" date="2014" name="G3 (Bethesda)">
        <title>The reference genome sequence of Saccharomyces cerevisiae: Then and now.</title>
        <authorList>
            <person name="Engel S.R."/>
            <person name="Dietrich F.S."/>
            <person name="Fisk D.G."/>
            <person name="Binkley G."/>
            <person name="Balakrishnan R."/>
            <person name="Costanzo M.C."/>
            <person name="Dwight S.S."/>
            <person name="Hitz B.C."/>
            <person name="Karra K."/>
            <person name="Nash R.S."/>
            <person name="Weng S."/>
            <person name="Wong E.D."/>
            <person name="Lloyd P."/>
            <person name="Skrzypek M.S."/>
            <person name="Miyasato S.R."/>
            <person name="Simison M."/>
            <person name="Cherry J.M."/>
        </authorList>
    </citation>
    <scope>GENOME REANNOTATION</scope>
    <source>
        <strain>ATCC 204508 / S288c</strain>
    </source>
</reference>
<reference key="4">
    <citation type="journal article" date="1996" name="J. Bacteriol.">
        <title>HKR1 encodes a cell surface protein that regulates both cell wall beta-glucan synthesis and budding pattern in the yeast Saccharomyces cerevisiae.</title>
        <authorList>
            <person name="Yabe T."/>
            <person name="Yamada-Okabe T."/>
            <person name="Kasahara S."/>
            <person name="Furuichi Y."/>
            <person name="Nakajima T."/>
            <person name="Ichishima E."/>
            <person name="Arisawa M."/>
            <person name="Yamada-Okabe H."/>
        </authorList>
    </citation>
    <scope>FUNCTION</scope>
    <scope>SUBCELLULAR LOCATION</scope>
</reference>
<reference key="5">
    <citation type="journal article" date="1999" name="FEMS Microbiol. Lett.">
        <title>Variations in mRNA transcript levels of cell wall-associated genes of Saccharomyces cerevisiae following spheroplasting.</title>
        <authorList>
            <person name="Braley R."/>
            <person name="Chaffin W.L."/>
        </authorList>
    </citation>
    <scope>INDUCTION</scope>
</reference>
<reference key="6">
    <citation type="journal article" date="2009" name="Mol. Biol. Cell">
        <title>The signaling mucins Msb2 and Hkr1 differentially regulate the filamentation mitogen-activated protein kinase pathway and contribute to a multimodal response.</title>
        <authorList>
            <person name="Pitoniak A."/>
            <person name="Birkaya B."/>
            <person name="Dionne H.M."/>
            <person name="Vadaie N."/>
            <person name="Cullen P.J."/>
        </authorList>
    </citation>
    <scope>FUNCTION</scope>
</reference>
<reference key="7">
    <citation type="journal article" date="2009" name="Science">
        <title>Global analysis of Cdk1 substrate phosphorylation sites provides insights into evolution.</title>
        <authorList>
            <person name="Holt L.J."/>
            <person name="Tuch B.B."/>
            <person name="Villen J."/>
            <person name="Johnson A.D."/>
            <person name="Gygi S.P."/>
            <person name="Morgan D.O."/>
        </authorList>
    </citation>
    <scope>IDENTIFICATION BY MASS SPECTROMETRY [LARGE SCALE ANALYSIS]</scope>
</reference>
<name>HKR1_YEAST</name>
<organism>
    <name type="scientific">Saccharomyces cerevisiae (strain ATCC 204508 / S288c)</name>
    <name type="common">Baker's yeast</name>
    <dbReference type="NCBI Taxonomy" id="559292"/>
    <lineage>
        <taxon>Eukaryota</taxon>
        <taxon>Fungi</taxon>
        <taxon>Dikarya</taxon>
        <taxon>Ascomycota</taxon>
        <taxon>Saccharomycotina</taxon>
        <taxon>Saccharomycetes</taxon>
        <taxon>Saccharomycetales</taxon>
        <taxon>Saccharomycetaceae</taxon>
        <taxon>Saccharomyces</taxon>
    </lineage>
</organism>
<feature type="signal peptide" evidence="1">
    <location>
        <begin position="1"/>
        <end position="21"/>
    </location>
</feature>
<feature type="chain" id="PRO_0000021444" description="Signaling mucin HKR1">
    <location>
        <begin position="22"/>
        <end position="1802"/>
    </location>
</feature>
<feature type="topological domain" description="Extracellular" evidence="1">
    <location>
        <begin position="22"/>
        <end position="1485"/>
    </location>
</feature>
<feature type="transmembrane region" description="Helical" evidence="1">
    <location>
        <begin position="1486"/>
        <end position="1506"/>
    </location>
</feature>
<feature type="topological domain" description="Cytoplasmic" evidence="1">
    <location>
        <begin position="1507"/>
        <end position="1802"/>
    </location>
</feature>
<feature type="repeat" description="1; approximate">
    <location>
        <begin position="453"/>
        <end position="480"/>
    </location>
</feature>
<feature type="repeat" description="2">
    <location>
        <begin position="481"/>
        <end position="508"/>
    </location>
</feature>
<feature type="repeat" description="3">
    <location>
        <begin position="509"/>
        <end position="536"/>
    </location>
</feature>
<feature type="repeat" description="4">
    <location>
        <begin position="537"/>
        <end position="564"/>
    </location>
</feature>
<feature type="repeat" description="5">
    <location>
        <begin position="565"/>
        <end position="592"/>
    </location>
</feature>
<feature type="repeat" description="6">
    <location>
        <begin position="593"/>
        <end position="620"/>
    </location>
</feature>
<feature type="repeat" description="7">
    <location>
        <begin position="621"/>
        <end position="648"/>
    </location>
</feature>
<feature type="repeat" description="8">
    <location>
        <begin position="649"/>
        <end position="676"/>
    </location>
</feature>
<feature type="repeat" description="9">
    <location>
        <begin position="677"/>
        <end position="704"/>
    </location>
</feature>
<feature type="repeat" description="10">
    <location>
        <begin position="705"/>
        <end position="732"/>
    </location>
</feature>
<feature type="repeat" description="11">
    <location>
        <begin position="733"/>
        <end position="760"/>
    </location>
</feature>
<feature type="repeat" description="12">
    <location>
        <begin position="761"/>
        <end position="788"/>
    </location>
</feature>
<feature type="region of interest" description="Disordered" evidence="2">
    <location>
        <begin position="47"/>
        <end position="176"/>
    </location>
</feature>
<feature type="region of interest" description="Disordered" evidence="2">
    <location>
        <begin position="261"/>
        <end position="311"/>
    </location>
</feature>
<feature type="region of interest" description="12 X 28 AA tandem repeats of S-[AV]-[P]-V-A-V-S-S-T-Y-T-S-S-P-S-A-P-A-A-I-S-S-T-Y-T-S-S-P">
    <location>
        <begin position="453"/>
        <end position="788"/>
    </location>
</feature>
<feature type="region of interest" description="Disordered" evidence="2">
    <location>
        <begin position="961"/>
        <end position="984"/>
    </location>
</feature>
<feature type="region of interest" description="Disordered" evidence="2">
    <location>
        <begin position="1067"/>
        <end position="1165"/>
    </location>
</feature>
<feature type="region of interest" description="Disordered" evidence="2">
    <location>
        <begin position="1534"/>
        <end position="1559"/>
    </location>
</feature>
<feature type="compositionally biased region" description="Polar residues" evidence="2">
    <location>
        <begin position="54"/>
        <end position="81"/>
    </location>
</feature>
<feature type="compositionally biased region" description="Low complexity" evidence="2">
    <location>
        <begin position="88"/>
        <end position="107"/>
    </location>
</feature>
<feature type="compositionally biased region" description="Polar residues" evidence="2">
    <location>
        <begin position="113"/>
        <end position="143"/>
    </location>
</feature>
<feature type="compositionally biased region" description="Low complexity" evidence="2">
    <location>
        <begin position="145"/>
        <end position="172"/>
    </location>
</feature>
<feature type="compositionally biased region" description="Low complexity" evidence="2">
    <location>
        <begin position="261"/>
        <end position="302"/>
    </location>
</feature>
<feature type="compositionally biased region" description="Polar residues" evidence="2">
    <location>
        <begin position="970"/>
        <end position="984"/>
    </location>
</feature>
<feature type="compositionally biased region" description="Polar residues" evidence="2">
    <location>
        <begin position="1071"/>
        <end position="1123"/>
    </location>
</feature>
<feature type="compositionally biased region" description="Low complexity" evidence="2">
    <location>
        <begin position="1136"/>
        <end position="1165"/>
    </location>
</feature>
<feature type="glycosylation site" description="N-linked (GlcNAc...) asparagine" evidence="1">
    <location>
        <position position="24"/>
    </location>
</feature>
<feature type="glycosylation site" description="N-linked (GlcNAc...) asparagine" evidence="1">
    <location>
        <position position="1252"/>
    </location>
</feature>
<feature type="glycosylation site" description="N-linked (GlcNAc...) asparagine" evidence="1">
    <location>
        <position position="1293"/>
    </location>
</feature>
<feature type="glycosylation site" description="N-linked (GlcNAc...) asparagine" evidence="1">
    <location>
        <position position="1342"/>
    </location>
</feature>
<feature type="glycosylation site" description="N-linked (GlcNAc...) asparagine" evidence="1">
    <location>
        <position position="1400"/>
    </location>
</feature>
<feature type="sequence conflict" description="In Ref. 1; AAB30051." evidence="6" ref="1">
    <original>V</original>
    <variation>A</variation>
    <location>
        <position position="582"/>
    </location>
</feature>
<feature type="sequence conflict" description="In Ref. 1; AAB30051." evidence="6" ref="1">
    <original>V</original>
    <variation>A</variation>
    <location>
        <position position="594"/>
    </location>
</feature>
<comment type="function">
    <text evidence="4 5">Plasma membrane signaling mucin that promotes activation of the MAPK for the filamentous growth pathway. May regulate beta-glucan synthesis. Overexpression provides resistance to HM-1 killer toxin.</text>
</comment>
<comment type="subcellular location">
    <subcellularLocation>
        <location evidence="5">Cell membrane</location>
        <topology evidence="5">Single-pass type I membrane protein</topology>
    </subcellularLocation>
</comment>
<comment type="induction">
    <text evidence="3">Expression is highly increased during spheroplast regeneration.</text>
</comment>
<comment type="PTM">
    <text>Could be O-glycosylated in the serine/threonine-rich domain.</text>
</comment>
<comment type="similarity">
    <text evidence="6">Belongs to the HKR1/MSB2 family.</text>
</comment>
<keyword id="KW-1003">Cell membrane</keyword>
<keyword id="KW-0325">Glycoprotein</keyword>
<keyword id="KW-0472">Membrane</keyword>
<keyword id="KW-1185">Reference proteome</keyword>
<keyword id="KW-0677">Repeat</keyword>
<keyword id="KW-0732">Signal</keyword>
<keyword id="KW-0812">Transmembrane</keyword>
<keyword id="KW-1133">Transmembrane helix</keyword>
<evidence type="ECO:0000255" key="1"/>
<evidence type="ECO:0000256" key="2">
    <source>
        <dbReference type="SAM" id="MobiDB-lite"/>
    </source>
</evidence>
<evidence type="ECO:0000269" key="3">
    <source>
    </source>
</evidence>
<evidence type="ECO:0000269" key="4">
    <source>
    </source>
</evidence>
<evidence type="ECO:0000269" key="5">
    <source>
    </source>
</evidence>
<evidence type="ECO:0000305" key="6"/>
<sequence length="1802" mass="188948">MVSLKIKKILLLVSLLNAIEAYSNDTIYSTSYNNGIESTPSYSTSAISSTGSSNKENAITSSSETTTMAGQYGESGSTTIMDEQETGTSSQYISVTTTTQTSDTMSSVKKSTEIATPSSSIVPTPLQSYSDESQISQTLSHNPKSVAESDSDTTSSESSSSVIISTSDSSAVPREISPIITTDSQISKEEGTLAQTSSISETTRIAQMVTRVSQISSITAASTIDGFSSESTQTDFSNTVSFENSVEEEYAMSKSQLSESYSSSSTVYSGGESTADKTSSSPITSFSSSYSQTTSTETSESSRVAVGVSRPSSITQTTSIDSFSMSEVELSTYYDLSAGNYPDQELIVDRPATSSTAETSSEASQGVSRESNTFAVSSISTTNFIVSSASDTVVSTSSTNTVPYSSVHSTFVHATSSSTYISSSLYSSPSLSASVSSHFGVAPFPSAYISFSSVPVAVSSTYTSSPSASVVVPSAYASSPSVPVAVSSTYTSSPSAPAAISSTYTSSPSAPVAVSSTYTSSPSAPAAISSTYTSSPSAPVAVSSTYTSSPSAPAAISSTYTSSPSAPVAVSSTYTSSPSAPVAISSTYTSSPSVPVAVSSTYTSSPSAPAAISSTYTSSPSAPVAVSSTYTSSPSAPAAISSTYTSSPSVPVAVSSTYTSSPSAPAAISSTYTSSPSVPVAVSSTYTSSPSAPAAISSTYTSSPSAPVAVSSTYTSSPSAPAAISSTYTSSPSAPVAVSSTYTSSPSAPAAISSTYTSSPSAPVAVSSTYTSSPSALVVLSSTSTSSPYDIVYSPSTFAAISSGYTPSPSASVAMSSTSSSSPYDIVYSLSSSASRSSIATYEFSPSPSTSLPTSSTYTYFSSAYAFEFSSERYSTTSTIAPTQIHSTLSRITDFLLQTSMAIQSIVSQQISTSSTLNDEIHSSALSVFNPSASNLVETSLIISSTQASITSPKNSAKISSLQSQLSSSTKNPYDTANKNTETSGRSTVVSNFLYTSSAAKPDNEKFSATPTEITTISSSSHAYSLSIPSSHNSVTGLSHNFVDSSKSATSFGYSSSSISSIKLSKETIPASKSVSNTQERITSFTSTLRANSQSEKSEGRNSVGSLQSSHISSNPSLSTNTKVDSKSLSRKVSKTMGENGEETGLTTTKTQYKSSSETSGSYSRSFTKISIGPATTAVQTQASTNSVFTAPALSTYPTTPYPSPNSYAWLPTAIIVESSETGPTTASFNPSITGSLPNAIEPAVAVSEPINHTLITIGFTAALNYVFLVQNPLSSAQIFNFLPLVLKYPFSNTSSELDNSIGELSTFILSYRSGSSTTTLSPKSISSLSVVKKKKNQQKKNATKSTEDLHPPQVDTSSIAVKKIVPMVDSSKAYIVSVAEVYFPTEAVTYLQQLILDENSTLYSNPQTPLRSLAGLIDSGIPLGGLTLYGSGDGGYVPSLTSSSVLDSSKGNSQNIDGTYKYGALDDFINSFTDSASAGKYAVKIIIFLIVLTIGVLLWLFVAFFAFRHRNILLKRHPRNCIGKSLNNERELESTELSRSSSGNQVYNEKPPESENESVYSAVDDHYIVTGENTVYNTIHRLHYTINDDGDLLYRDAIPLDFDQTNGDDGSGIDSIVRDCVYDKNQDATEAFLNDEESISGILDVDENGDIRLYDSYSDNEESNSFHLPDEVIENYNKNHLCETKLHGLGTESCTTDDPDTGNQITNEFSTGSQTCLPSTAYTTPLHTNSIKLHTLRYTESSLPKPNQTLFSNLEDLEIEDIDDNGSVSDVHIEELDALDEELYKRMSKVIKQQNHQTTKI</sequence>
<protein>
    <recommendedName>
        <fullName>Signaling mucin HKR1</fullName>
    </recommendedName>
    <alternativeName>
        <fullName>Hansenula MRAKII killer toxin-resistant protein 1</fullName>
    </alternativeName>
</protein>
<gene>
    <name type="primary">HKR1</name>
    <name type="ordered locus">YDR420W</name>
</gene>
<dbReference type="EMBL" id="S69101">
    <property type="protein sequence ID" value="AAB30051.1"/>
    <property type="molecule type" value="Genomic_DNA"/>
</dbReference>
<dbReference type="EMBL" id="U33007">
    <property type="protein sequence ID" value="AAB64857.1"/>
    <property type="molecule type" value="Genomic_DNA"/>
</dbReference>
<dbReference type="EMBL" id="BK006938">
    <property type="protein sequence ID" value="DAA12260.1"/>
    <property type="molecule type" value="Genomic_DNA"/>
</dbReference>
<dbReference type="PIR" id="S69703">
    <property type="entry name" value="S69703"/>
</dbReference>
<dbReference type="RefSeq" id="NP_010708.1">
    <property type="nucleotide sequence ID" value="NM_001180728.1"/>
</dbReference>
<dbReference type="SMR" id="P41809"/>
<dbReference type="BioGRID" id="32479">
    <property type="interactions" value="130"/>
</dbReference>
<dbReference type="FunCoup" id="P41809">
    <property type="interactions" value="142"/>
</dbReference>
<dbReference type="IntAct" id="P41809">
    <property type="interactions" value="3"/>
</dbReference>
<dbReference type="MINT" id="P41809"/>
<dbReference type="STRING" id="4932.YDR420W"/>
<dbReference type="GlyCosmos" id="P41809">
    <property type="glycosylation" value="5 sites, No reported glycans"/>
</dbReference>
<dbReference type="GlyGen" id="P41809">
    <property type="glycosylation" value="7 sites"/>
</dbReference>
<dbReference type="iPTMnet" id="P41809"/>
<dbReference type="PaxDb" id="4932-YDR420W"/>
<dbReference type="PeptideAtlas" id="P41809"/>
<dbReference type="EnsemblFungi" id="YDR420W_mRNA">
    <property type="protein sequence ID" value="YDR420W"/>
    <property type="gene ID" value="YDR420W"/>
</dbReference>
<dbReference type="GeneID" id="852030"/>
<dbReference type="KEGG" id="sce:YDR420W"/>
<dbReference type="AGR" id="SGD:S000002828"/>
<dbReference type="SGD" id="S000002828">
    <property type="gene designation" value="HKR1"/>
</dbReference>
<dbReference type="VEuPathDB" id="FungiDB:YDR420W"/>
<dbReference type="eggNOG" id="ENOG502RXIN">
    <property type="taxonomic scope" value="Eukaryota"/>
</dbReference>
<dbReference type="GeneTree" id="ENSGT01060000249859"/>
<dbReference type="HOGENOM" id="CLU_250296_0_0_1"/>
<dbReference type="InParanoid" id="P41809"/>
<dbReference type="OMA" id="SHISTIM"/>
<dbReference type="OrthoDB" id="3366093at2759"/>
<dbReference type="BioCyc" id="YEAST:G3O-29961-MONOMER"/>
<dbReference type="BioGRID-ORCS" id="852030">
    <property type="hits" value="4 hits in 10 CRISPR screens"/>
</dbReference>
<dbReference type="PRO" id="PR:P41809"/>
<dbReference type="Proteomes" id="UP000002311">
    <property type="component" value="Chromosome IV"/>
</dbReference>
<dbReference type="RNAct" id="P41809">
    <property type="molecule type" value="protein"/>
</dbReference>
<dbReference type="GO" id="GO:0009986">
    <property type="term" value="C:cell surface"/>
    <property type="evidence" value="ECO:0000318"/>
    <property type="project" value="GO_Central"/>
</dbReference>
<dbReference type="GO" id="GO:0005576">
    <property type="term" value="C:extracellular region"/>
    <property type="evidence" value="ECO:0000318"/>
    <property type="project" value="GO_Central"/>
</dbReference>
<dbReference type="GO" id="GO:0005886">
    <property type="term" value="C:plasma membrane"/>
    <property type="evidence" value="ECO:0000314"/>
    <property type="project" value="SGD"/>
</dbReference>
<dbReference type="GO" id="GO:0030427">
    <property type="term" value="C:site of polarized growth"/>
    <property type="evidence" value="ECO:0000314"/>
    <property type="project" value="SGD"/>
</dbReference>
<dbReference type="GO" id="GO:0005034">
    <property type="term" value="F:osmosensor activity"/>
    <property type="evidence" value="ECO:0000316"/>
    <property type="project" value="SGD"/>
</dbReference>
<dbReference type="GO" id="GO:0006075">
    <property type="term" value="P:(1-&gt;3)-beta-D-glucan biosynthetic process"/>
    <property type="evidence" value="ECO:0000315"/>
    <property type="project" value="SGD"/>
</dbReference>
<dbReference type="GO" id="GO:0000282">
    <property type="term" value="P:cellular bud site selection"/>
    <property type="evidence" value="ECO:0000315"/>
    <property type="project" value="SGD"/>
</dbReference>
<dbReference type="GO" id="GO:0031505">
    <property type="term" value="P:fungal-type cell wall organization"/>
    <property type="evidence" value="ECO:0000315"/>
    <property type="project" value="SGD"/>
</dbReference>
<dbReference type="GO" id="GO:0006972">
    <property type="term" value="P:hyperosmotic response"/>
    <property type="evidence" value="ECO:0000316"/>
    <property type="project" value="SGD"/>
</dbReference>
<dbReference type="GO" id="GO:0007232">
    <property type="term" value="P:osmosensory signaling pathway via Sho1 osmosensor"/>
    <property type="evidence" value="ECO:0000316"/>
    <property type="project" value="SGD"/>
</dbReference>
<dbReference type="GO" id="GO:0001402">
    <property type="term" value="P:signal transduction involved in filamentous growth"/>
    <property type="evidence" value="ECO:0000318"/>
    <property type="project" value="GO_Central"/>
</dbReference>
<dbReference type="InterPro" id="IPR039295">
    <property type="entry name" value="MSB2"/>
</dbReference>
<dbReference type="PANTHER" id="PTHR35778">
    <property type="entry name" value="SIGNALING MUCIN HKR1-RELATED"/>
    <property type="match status" value="1"/>
</dbReference>
<dbReference type="PANTHER" id="PTHR35778:SF1">
    <property type="entry name" value="SIGNALING MUCIN HKR1-RELATED"/>
    <property type="match status" value="1"/>
</dbReference>